<name>RM51_DROPS</name>
<gene>
    <name type="primary">mRpL51</name>
    <name type="ORF">GA12045</name>
</gene>
<dbReference type="EMBL" id="CH379058">
    <property type="protein sequence ID" value="EAL34329.1"/>
    <property type="molecule type" value="Genomic_DNA"/>
</dbReference>
<dbReference type="RefSeq" id="XP_001357260.1">
    <property type="nucleotide sequence ID" value="XM_001357224.3"/>
</dbReference>
<dbReference type="SMR" id="Q29PG4"/>
<dbReference type="FunCoup" id="Q29PG4">
    <property type="interactions" value="220"/>
</dbReference>
<dbReference type="STRING" id="46245.Q29PG4"/>
<dbReference type="EnsemblMetazoa" id="FBtr0280839">
    <property type="protein sequence ID" value="FBpp0279277"/>
    <property type="gene ID" value="FBgn0072093"/>
</dbReference>
<dbReference type="eggNOG" id="KOG4045">
    <property type="taxonomic scope" value="Eukaryota"/>
</dbReference>
<dbReference type="HOGENOM" id="CLU_116884_0_0_1"/>
<dbReference type="InParanoid" id="Q29PG4"/>
<dbReference type="OMA" id="RPKNAWS"/>
<dbReference type="PhylomeDB" id="Q29PG4"/>
<dbReference type="Proteomes" id="UP000001819">
    <property type="component" value="Unplaced"/>
</dbReference>
<dbReference type="Bgee" id="FBgn0072093">
    <property type="expression patterns" value="Expressed in female reproductive system and 2 other cell types or tissues"/>
</dbReference>
<dbReference type="GO" id="GO:0005762">
    <property type="term" value="C:mitochondrial large ribosomal subunit"/>
    <property type="evidence" value="ECO:0000250"/>
    <property type="project" value="UniProtKB"/>
</dbReference>
<dbReference type="GO" id="GO:0003735">
    <property type="term" value="F:structural constituent of ribosome"/>
    <property type="evidence" value="ECO:0000250"/>
    <property type="project" value="UniProtKB"/>
</dbReference>
<dbReference type="GO" id="GO:0006412">
    <property type="term" value="P:translation"/>
    <property type="evidence" value="ECO:0000250"/>
    <property type="project" value="UniProtKB"/>
</dbReference>
<dbReference type="InterPro" id="IPR019373">
    <property type="entry name" value="Ribosomal_mL51"/>
</dbReference>
<dbReference type="PANTHER" id="PTHR13409:SF0">
    <property type="entry name" value="LARGE RIBOSOMAL SUBUNIT PROTEIN ML51"/>
    <property type="match status" value="1"/>
</dbReference>
<dbReference type="PANTHER" id="PTHR13409">
    <property type="entry name" value="MITOCHONDRIAL 39S RIBOSOMAL PROTEIN L51"/>
    <property type="match status" value="1"/>
</dbReference>
<dbReference type="Pfam" id="PF10244">
    <property type="entry name" value="MRP-L51"/>
    <property type="match status" value="1"/>
</dbReference>
<comment type="subunit">
    <text evidence="1">Component of the mitochondrial ribosome large subunit (39S) which comprises a 16S rRNA and about 50 distinct proteins (By similarity).</text>
</comment>
<comment type="subcellular location">
    <subcellularLocation>
        <location evidence="1">Mitochondrion</location>
    </subcellularLocation>
</comment>
<comment type="similarity">
    <text evidence="3">Belongs to the mitochondrion-specific ribosomal protein mL51 family.</text>
</comment>
<accession>Q29PG4</accession>
<proteinExistence type="inferred from homology"/>
<reference key="1">
    <citation type="journal article" date="2005" name="Genome Res.">
        <title>Comparative genome sequencing of Drosophila pseudoobscura: chromosomal, gene, and cis-element evolution.</title>
        <authorList>
            <person name="Richards S."/>
            <person name="Liu Y."/>
            <person name="Bettencourt B.R."/>
            <person name="Hradecky P."/>
            <person name="Letovsky S."/>
            <person name="Nielsen R."/>
            <person name="Thornton K."/>
            <person name="Hubisz M.J."/>
            <person name="Chen R."/>
            <person name="Meisel R.P."/>
            <person name="Couronne O."/>
            <person name="Hua S."/>
            <person name="Smith M.A."/>
            <person name="Zhang P."/>
            <person name="Liu J."/>
            <person name="Bussemaker H.J."/>
            <person name="van Batenburg M.F."/>
            <person name="Howells S.L."/>
            <person name="Scherer S.E."/>
            <person name="Sodergren E."/>
            <person name="Matthews B.B."/>
            <person name="Crosby M.A."/>
            <person name="Schroeder A.J."/>
            <person name="Ortiz-Barrientos D."/>
            <person name="Rives C.M."/>
            <person name="Metzker M.L."/>
            <person name="Muzny D.M."/>
            <person name="Scott G."/>
            <person name="Steffen D."/>
            <person name="Wheeler D.A."/>
            <person name="Worley K.C."/>
            <person name="Havlak P."/>
            <person name="Durbin K.J."/>
            <person name="Egan A."/>
            <person name="Gill R."/>
            <person name="Hume J."/>
            <person name="Morgan M.B."/>
            <person name="Miner G."/>
            <person name="Hamilton C."/>
            <person name="Huang Y."/>
            <person name="Waldron L."/>
            <person name="Verduzco D."/>
            <person name="Clerc-Blankenburg K.P."/>
            <person name="Dubchak I."/>
            <person name="Noor M.A.F."/>
            <person name="Anderson W."/>
            <person name="White K.P."/>
            <person name="Clark A.G."/>
            <person name="Schaeffer S.W."/>
            <person name="Gelbart W.M."/>
            <person name="Weinstock G.M."/>
            <person name="Gibbs R.A."/>
        </authorList>
    </citation>
    <scope>NUCLEOTIDE SEQUENCE [LARGE SCALE GENOMIC DNA]</scope>
    <source>
        <strain>MV2-25 / Tucson 14011-0121.94</strain>
    </source>
</reference>
<organism>
    <name type="scientific">Drosophila pseudoobscura pseudoobscura</name>
    <name type="common">Fruit fly</name>
    <dbReference type="NCBI Taxonomy" id="46245"/>
    <lineage>
        <taxon>Eukaryota</taxon>
        <taxon>Metazoa</taxon>
        <taxon>Ecdysozoa</taxon>
        <taxon>Arthropoda</taxon>
        <taxon>Hexapoda</taxon>
        <taxon>Insecta</taxon>
        <taxon>Pterygota</taxon>
        <taxon>Neoptera</taxon>
        <taxon>Endopterygota</taxon>
        <taxon>Diptera</taxon>
        <taxon>Brachycera</taxon>
        <taxon>Muscomorpha</taxon>
        <taxon>Ephydroidea</taxon>
        <taxon>Drosophilidae</taxon>
        <taxon>Drosophila</taxon>
        <taxon>Sophophora</taxon>
    </lineage>
</organism>
<sequence>MSWLSNTIQKLCRVTLLSAGSNPLPAISATSTTVRQLSHAERRARGPTVRRYGYKDKIFKSGLLPHLDNGQKLPMPVYRPKNPWSEKRALFGQNDYIDILGNDRLHPVRVMYSVPSWLRGVSGNEYQVLLRKRRLLEKSKYPIARPTKWRDMQKRILYLYKFLNRKTKTGYSKQ</sequence>
<evidence type="ECO:0000250" key="1">
    <source>
        <dbReference type="UniProtKB" id="Q4U2R6"/>
    </source>
</evidence>
<evidence type="ECO:0000255" key="2"/>
<evidence type="ECO:0000305" key="3"/>
<protein>
    <recommendedName>
        <fullName evidence="3">Large ribosomal subunit protein mL51</fullName>
    </recommendedName>
    <alternativeName>
        <fullName>39S ribosomal protein L51, mitochondrial</fullName>
        <shortName>L51mt</shortName>
        <shortName>MRP-L51</shortName>
    </alternativeName>
</protein>
<feature type="transit peptide" description="Mitochondrion" evidence="2">
    <location>
        <begin position="1"/>
        <end position="46"/>
    </location>
</feature>
<feature type="chain" id="PRO_0000273091" description="Large ribosomal subunit protein mL51">
    <location>
        <begin position="47"/>
        <end position="174"/>
    </location>
</feature>
<keyword id="KW-0496">Mitochondrion</keyword>
<keyword id="KW-1185">Reference proteome</keyword>
<keyword id="KW-0687">Ribonucleoprotein</keyword>
<keyword id="KW-0689">Ribosomal protein</keyword>
<keyword id="KW-0809">Transit peptide</keyword>